<proteinExistence type="evidence at transcript level"/>
<dbReference type="EC" id="6.-.-.-"/>
<dbReference type="EMBL" id="AM690745">
    <property type="protein sequence ID" value="CAM84322.1"/>
    <property type="molecule type" value="mRNA"/>
</dbReference>
<dbReference type="CCDS" id="CCDS49941.1"/>
<dbReference type="RefSeq" id="NP_001091737.1">
    <property type="nucleotide sequence ID" value="NM_001098267.2"/>
</dbReference>
<dbReference type="RefSeq" id="NP_001401283.1">
    <property type="nucleotide sequence ID" value="NM_001414354.1"/>
</dbReference>
<dbReference type="RefSeq" id="XP_011244474.1">
    <property type="nucleotide sequence ID" value="XM_011246172.2"/>
</dbReference>
<dbReference type="RefSeq" id="XP_011244476.1">
    <property type="nucleotide sequence ID" value="XM_011246174.3"/>
</dbReference>
<dbReference type="RefSeq" id="XP_011244477.1">
    <property type="nucleotide sequence ID" value="XM_011246175.2"/>
</dbReference>
<dbReference type="SMR" id="A4Q9E4"/>
<dbReference type="BioGRID" id="950147">
    <property type="interactions" value="1"/>
</dbReference>
<dbReference type="FunCoup" id="A4Q9E4">
    <property type="interactions" value="33"/>
</dbReference>
<dbReference type="STRING" id="10090.ENSMUSP00000111413"/>
<dbReference type="GlyGen" id="A4Q9E4">
    <property type="glycosylation" value="1 site"/>
</dbReference>
<dbReference type="PhosphoSitePlus" id="A4Q9E4"/>
<dbReference type="PaxDb" id="10090-ENSMUSP00000111413"/>
<dbReference type="ProteomicsDB" id="298337"/>
<dbReference type="Antibodypedia" id="20063">
    <property type="antibodies" value="31 antibodies from 9 providers"/>
</dbReference>
<dbReference type="Ensembl" id="ENSMUST00000115747.3">
    <property type="protein sequence ID" value="ENSMUSP00000111413.2"/>
    <property type="gene ID" value="ENSMUSG00000079722.3"/>
</dbReference>
<dbReference type="GeneID" id="100216474"/>
<dbReference type="KEGG" id="mmu:100216474"/>
<dbReference type="UCSC" id="uc008ain.1">
    <property type="organism name" value="mouse"/>
</dbReference>
<dbReference type="AGR" id="MGI:3644030"/>
<dbReference type="CTD" id="83887"/>
<dbReference type="MGI" id="MGI:3644030">
    <property type="gene designation" value="Ttll2"/>
</dbReference>
<dbReference type="VEuPathDB" id="HostDB:ENSMUSG00000079722"/>
<dbReference type="eggNOG" id="KOG2157">
    <property type="taxonomic scope" value="Eukaryota"/>
</dbReference>
<dbReference type="GeneTree" id="ENSGT00940000162752"/>
<dbReference type="HOGENOM" id="CLU_010131_9_0_1"/>
<dbReference type="InParanoid" id="A4Q9E4"/>
<dbReference type="OMA" id="GLDAHDC"/>
<dbReference type="OrthoDB" id="277439at2759"/>
<dbReference type="PhylomeDB" id="A4Q9E4"/>
<dbReference type="TreeFam" id="TF313087"/>
<dbReference type="Reactome" id="R-MMU-8955332">
    <property type="pathway name" value="Carboxyterminal post-translational modifications of tubulin"/>
</dbReference>
<dbReference type="BioGRID-ORCS" id="100216474">
    <property type="hits" value="6 hits in 77 CRISPR screens"/>
</dbReference>
<dbReference type="ChiTaRS" id="Ttll2">
    <property type="organism name" value="mouse"/>
</dbReference>
<dbReference type="PRO" id="PR:A4Q9E4"/>
<dbReference type="Proteomes" id="UP000000589">
    <property type="component" value="Chromosome 17"/>
</dbReference>
<dbReference type="RNAct" id="A4Q9E4">
    <property type="molecule type" value="protein"/>
</dbReference>
<dbReference type="Bgee" id="ENSMUSG00000079722">
    <property type="expression patterns" value="Expressed in testis and 14 other cell types or tissues"/>
</dbReference>
<dbReference type="GO" id="GO:0005524">
    <property type="term" value="F:ATP binding"/>
    <property type="evidence" value="ECO:0007669"/>
    <property type="project" value="UniProtKB-KW"/>
</dbReference>
<dbReference type="GO" id="GO:0046872">
    <property type="term" value="F:metal ion binding"/>
    <property type="evidence" value="ECO:0007669"/>
    <property type="project" value="UniProtKB-KW"/>
</dbReference>
<dbReference type="GO" id="GO:0070740">
    <property type="term" value="F:tubulin-glutamic acid ligase activity"/>
    <property type="evidence" value="ECO:0007669"/>
    <property type="project" value="UniProtKB-ARBA"/>
</dbReference>
<dbReference type="GO" id="GO:0036211">
    <property type="term" value="P:protein modification process"/>
    <property type="evidence" value="ECO:0007669"/>
    <property type="project" value="InterPro"/>
</dbReference>
<dbReference type="Gene3D" id="3.30.470.20">
    <property type="entry name" value="ATP-grasp fold, B domain"/>
    <property type="match status" value="1"/>
</dbReference>
<dbReference type="InterPro" id="IPR004344">
    <property type="entry name" value="TTL/TTLL_fam"/>
</dbReference>
<dbReference type="PANTHER" id="PTHR12241">
    <property type="entry name" value="TUBULIN POLYGLUTAMYLASE"/>
    <property type="match status" value="1"/>
</dbReference>
<dbReference type="PANTHER" id="PTHR12241:SF118">
    <property type="entry name" value="TUBULIN POLYGLUTAMYLASE TTLL2-RELATED"/>
    <property type="match status" value="1"/>
</dbReference>
<dbReference type="Pfam" id="PF03133">
    <property type="entry name" value="TTL"/>
    <property type="match status" value="1"/>
</dbReference>
<dbReference type="SUPFAM" id="SSF56059">
    <property type="entry name" value="Glutathione synthetase ATP-binding domain-like"/>
    <property type="match status" value="1"/>
</dbReference>
<dbReference type="PROSITE" id="PS51221">
    <property type="entry name" value="TTL"/>
    <property type="match status" value="1"/>
</dbReference>
<name>TTLL2_MOUSE</name>
<protein>
    <recommendedName>
        <fullName>Probable tubulin polyglutamylase TTLL2</fullName>
        <ecNumber>6.-.-.-</ecNumber>
    </recommendedName>
    <alternativeName>
        <fullName>Tubulin--tyrosine ligase-like protein 2</fullName>
    </alternativeName>
</protein>
<accession>A4Q9E4</accession>
<sequence>MDGLQSLGDVTAEIFGLPLEGHSVQESKPLKTEDEPQGAPLKPLVFRVDESTPGLVQSVLLERGWDKFDEQRQDVEDWNLYWRSSSFRRAEYVNVKPWQRLNHHPGMTNLTRKDCLAKHLARMRSRYGESLYEFTPLTFIMPTDYTKFVAKYFKEKQDLGTKPSYWICKPAELSRGRGIIIFSDIRDLMFKGTYVVQKYICNPLLVGRYKCDLRIYVCITGFKPLTIYMYQEGLVRFATEKFDLRNLEDYYSHLTNSSINKLGASYQKIKEVVGQGCKWTLSRFFSYLRNWDVDDLLLRQKISHMVILTVLAMAPSVPVTYNCFELFGFDILIDDNLKPWLLEVNYNPALTLDCSTDESVKRSLVHDVIELLYLNGLRSEEKKCGRTSPGNSVVSLARSHHHEFCATPNSSSYASLIEFTTGSKSDPAVQNICPKHTRTSQLREMMSRRDRLLTKEAAKSKPRHKAWHLPRKMVFPYASQSQPHKMKGPAGDLPEAGSTPNDHAGNFVLIFPFNKATFRASRNGLNVKRIIQELQKLMNK</sequence>
<gene>
    <name evidence="10" type="primary">Ttll2</name>
</gene>
<comment type="function">
    <text evidence="2 6 8">Probable tubulin polyglutamylase that generates side chains of glutamate on the gamma-carboxyl group of specific glutamate residues within the C-terminal tail of target proteins (PubMed:17499049). Similar to TTLL1, may acquire enzymatic activity only in complex with other proteins as it is most likely lacking domains important for autonomous activity (By similarity). Probably involved in the side-chain initiation step of the polyglutamylation reaction rather than the elongation step (Probable).</text>
</comment>
<comment type="cofactor">
    <cofactor evidence="1">
        <name>Mg(2+)</name>
        <dbReference type="ChEBI" id="CHEBI:18420"/>
    </cofactor>
</comment>
<comment type="tissue specificity">
    <text evidence="6">Highly expressed in brain, kidney, liver and testis (PubMed:17499049). Expressed in heart, lung, muscle and spleen (PubMed:17499049).</text>
</comment>
<comment type="domain">
    <text evidence="8">Arg-175 is the main determinant for regioselectivity, which segregates between initiases and elongases in all tubulin--tyrosine ligase family. A glutamine residue at this position is found in elongases TTLL6, TTLL9, TTLL11, TTLL13, TTLL10 and favors glutamate-chain elongation, whereas an arginine residue is found in initiases TTLL2, TTLL4, TTLL5, TTLL3, TTLL8 and favors initiation.</text>
</comment>
<comment type="similarity">
    <text evidence="3">Belongs to the tubulin--tyrosine ligase family.</text>
</comment>
<evidence type="ECO:0000250" key="1">
    <source>
        <dbReference type="UniProtKB" id="A4Q9E8"/>
    </source>
</evidence>
<evidence type="ECO:0000250" key="2">
    <source>
        <dbReference type="UniProtKB" id="Q91V51"/>
    </source>
</evidence>
<evidence type="ECO:0000255" key="3"/>
<evidence type="ECO:0000255" key="4">
    <source>
        <dbReference type="PROSITE-ProRule" id="PRU00568"/>
    </source>
</evidence>
<evidence type="ECO:0000256" key="5">
    <source>
        <dbReference type="SAM" id="MobiDB-lite"/>
    </source>
</evidence>
<evidence type="ECO:0000269" key="6">
    <source>
    </source>
</evidence>
<evidence type="ECO:0000305" key="7"/>
<evidence type="ECO:0000305" key="8">
    <source ref="2"/>
</evidence>
<evidence type="ECO:0000312" key="9">
    <source>
        <dbReference type="EMBL" id="CAM84322.1"/>
    </source>
</evidence>
<evidence type="ECO:0000312" key="10">
    <source>
        <dbReference type="MGI" id="MGI:3644030"/>
    </source>
</evidence>
<reference evidence="7 9" key="1">
    <citation type="journal article" date="2007" name="Mol. Cell">
        <title>A targeted multienzyme mechanism for selective microtubule polyglutamylation.</title>
        <authorList>
            <person name="van Dijk J."/>
            <person name="Rogowski K."/>
            <person name="Miro J."/>
            <person name="Lacroix B."/>
            <person name="Edde B."/>
            <person name="Janke C."/>
        </authorList>
    </citation>
    <scope>NUCLEOTIDE SEQUENCE [MRNA]</scope>
    <scope>FUNCTION</scope>
    <scope>TISSUE SPECIFICITY</scope>
    <source>
        <strain evidence="9">C57BL/6J</strain>
        <tissue evidence="9">Testis</tissue>
    </source>
</reference>
<reference key="2">
    <citation type="journal article" date="2020" name="Nat. Struct. Mol. Biol.">
        <title>Structural basis for polyglutamate chain initiation and elongation by TTLL family enzymes.</title>
        <authorList>
            <person name="Mahalingan K.K."/>
            <person name="Keith Keenan E."/>
            <person name="Strickland M."/>
            <person name="Li Y."/>
            <person name="Liu Y."/>
            <person name="Ball H.L."/>
            <person name="Tanner M.E."/>
            <person name="Tjandra N."/>
            <person name="Roll-Mecak A."/>
        </authorList>
    </citation>
    <scope>FUNCTION</scope>
</reference>
<keyword id="KW-0067">ATP-binding</keyword>
<keyword id="KW-0436">Ligase</keyword>
<keyword id="KW-0460">Magnesium</keyword>
<keyword id="KW-0479">Metal-binding</keyword>
<keyword id="KW-0547">Nucleotide-binding</keyword>
<keyword id="KW-1185">Reference proteome</keyword>
<organism>
    <name type="scientific">Mus musculus</name>
    <name type="common">Mouse</name>
    <dbReference type="NCBI Taxonomy" id="10090"/>
    <lineage>
        <taxon>Eukaryota</taxon>
        <taxon>Metazoa</taxon>
        <taxon>Chordata</taxon>
        <taxon>Craniata</taxon>
        <taxon>Vertebrata</taxon>
        <taxon>Euteleostomi</taxon>
        <taxon>Mammalia</taxon>
        <taxon>Eutheria</taxon>
        <taxon>Euarchontoglires</taxon>
        <taxon>Glires</taxon>
        <taxon>Rodentia</taxon>
        <taxon>Myomorpha</taxon>
        <taxon>Muroidea</taxon>
        <taxon>Muridae</taxon>
        <taxon>Murinae</taxon>
        <taxon>Mus</taxon>
        <taxon>Mus</taxon>
    </lineage>
</organism>
<feature type="chain" id="PRO_0000326158" description="Probable tubulin polyglutamylase TTLL2">
    <location>
        <begin position="1"/>
        <end position="540"/>
    </location>
</feature>
<feature type="domain" description="TTL" evidence="4">
    <location>
        <begin position="41"/>
        <end position="384"/>
    </location>
</feature>
<feature type="region of interest" description="Disordered" evidence="5">
    <location>
        <begin position="479"/>
        <end position="499"/>
    </location>
</feature>
<feature type="binding site" evidence="1">
    <location>
        <position position="169"/>
    </location>
    <ligand>
        <name>ATP</name>
        <dbReference type="ChEBI" id="CHEBI:30616"/>
    </ligand>
</feature>
<feature type="binding site" evidence="1">
    <location>
        <begin position="175"/>
        <end position="176"/>
    </location>
    <ligand>
        <name>ATP</name>
        <dbReference type="ChEBI" id="CHEBI:30616"/>
    </ligand>
</feature>
<feature type="binding site" evidence="1">
    <location>
        <position position="175"/>
    </location>
    <ligand>
        <name>a protein</name>
        <dbReference type="ChEBI" id="CHEBI:16541"/>
    </ligand>
    <ligandPart>
        <name>L-glutamate residue</name>
        <dbReference type="ChEBI" id="CHEBI:29973"/>
        <note>L-glutamate acceptor residue in protein target</note>
    </ligandPart>
</feature>
<feature type="binding site" evidence="1">
    <location>
        <begin position="197"/>
        <end position="200"/>
    </location>
    <ligand>
        <name>ATP</name>
        <dbReference type="ChEBI" id="CHEBI:30616"/>
    </ligand>
</feature>
<feature type="binding site" evidence="1">
    <location>
        <begin position="210"/>
        <end position="212"/>
    </location>
    <ligand>
        <name>ATP</name>
        <dbReference type="ChEBI" id="CHEBI:30616"/>
    </ligand>
</feature>
<feature type="binding site" evidence="1">
    <location>
        <position position="236"/>
    </location>
    <ligand>
        <name>L-glutamate</name>
        <dbReference type="ChEBI" id="CHEBI:29985"/>
    </ligand>
</feature>
<feature type="binding site" evidence="1">
    <location>
        <begin position="255"/>
        <end position="256"/>
    </location>
    <ligand>
        <name>ATP</name>
        <dbReference type="ChEBI" id="CHEBI:30616"/>
    </ligand>
</feature>
<feature type="binding site" evidence="1">
    <location>
        <position position="258"/>
    </location>
    <ligand>
        <name>L-glutamate</name>
        <dbReference type="ChEBI" id="CHEBI:29985"/>
    </ligand>
</feature>
<feature type="binding site" evidence="1">
    <location>
        <position position="278"/>
    </location>
    <ligand>
        <name>L-glutamate</name>
        <dbReference type="ChEBI" id="CHEBI:29985"/>
    </ligand>
</feature>
<feature type="binding site" evidence="1">
    <location>
        <position position="330"/>
    </location>
    <ligand>
        <name>Mg(2+)</name>
        <dbReference type="ChEBI" id="CHEBI:18420"/>
        <label>1</label>
    </ligand>
</feature>
<feature type="binding site" evidence="1">
    <location>
        <position position="343"/>
    </location>
    <ligand>
        <name>Mg(2+)</name>
        <dbReference type="ChEBI" id="CHEBI:18420"/>
        <label>1</label>
    </ligand>
</feature>
<feature type="binding site" evidence="1">
    <location>
        <position position="343"/>
    </location>
    <ligand>
        <name>Mg(2+)</name>
        <dbReference type="ChEBI" id="CHEBI:18420"/>
        <label>2</label>
    </ligand>
</feature>
<feature type="binding site" evidence="1">
    <location>
        <position position="345"/>
    </location>
    <ligand>
        <name>Mg(2+)</name>
        <dbReference type="ChEBI" id="CHEBI:18420"/>
        <label>2</label>
    </ligand>
</feature>
<feature type="binding site" evidence="1">
    <location>
        <position position="361"/>
    </location>
    <ligand>
        <name>L-glutamate</name>
        <dbReference type="ChEBI" id="CHEBI:29985"/>
    </ligand>
</feature>
<feature type="site" description="Essential for specifying initiation versus elongation step of the polyglutamylase activity" evidence="1">
    <location>
        <position position="175"/>
    </location>
</feature>